<reference key="1">
    <citation type="journal article" date="1999" name="Nat. Genet.">
        <title>Comparative genomes of Chlamydia pneumoniae and C. trachomatis.</title>
        <authorList>
            <person name="Kalman S."/>
            <person name="Mitchell W.P."/>
            <person name="Marathe R."/>
            <person name="Lammel C.J."/>
            <person name="Fan J."/>
            <person name="Hyman R.W."/>
            <person name="Olinger L."/>
            <person name="Grimwood J."/>
            <person name="Davis R.W."/>
            <person name="Stephens R.S."/>
        </authorList>
    </citation>
    <scope>NUCLEOTIDE SEQUENCE [LARGE SCALE GENOMIC DNA]</scope>
    <source>
        <strain>CWL029</strain>
    </source>
</reference>
<reference key="2">
    <citation type="journal article" date="2000" name="Nucleic Acids Res.">
        <title>Genome sequences of Chlamydia trachomatis MoPn and Chlamydia pneumoniae AR39.</title>
        <authorList>
            <person name="Read T.D."/>
            <person name="Brunham R.C."/>
            <person name="Shen C."/>
            <person name="Gill S.R."/>
            <person name="Heidelberg J.F."/>
            <person name="White O."/>
            <person name="Hickey E.K."/>
            <person name="Peterson J.D."/>
            <person name="Utterback T.R."/>
            <person name="Berry K.J."/>
            <person name="Bass S."/>
            <person name="Linher K.D."/>
            <person name="Weidman J.F."/>
            <person name="Khouri H.M."/>
            <person name="Craven B."/>
            <person name="Bowman C."/>
            <person name="Dodson R.J."/>
            <person name="Gwinn M.L."/>
            <person name="Nelson W.C."/>
            <person name="DeBoy R.T."/>
            <person name="Kolonay J.F."/>
            <person name="McClarty G."/>
            <person name="Salzberg S.L."/>
            <person name="Eisen J.A."/>
            <person name="Fraser C.M."/>
        </authorList>
    </citation>
    <scope>NUCLEOTIDE SEQUENCE [LARGE SCALE GENOMIC DNA]</scope>
    <source>
        <strain>AR39</strain>
    </source>
</reference>
<reference key="3">
    <citation type="journal article" date="2000" name="Nucleic Acids Res.">
        <title>Comparison of whole genome sequences of Chlamydia pneumoniae J138 from Japan and CWL029 from USA.</title>
        <authorList>
            <person name="Shirai M."/>
            <person name="Hirakawa H."/>
            <person name="Kimoto M."/>
            <person name="Tabuchi M."/>
            <person name="Kishi F."/>
            <person name="Ouchi K."/>
            <person name="Shiba T."/>
            <person name="Ishii K."/>
            <person name="Hattori M."/>
            <person name="Kuhara S."/>
            <person name="Nakazawa T."/>
        </authorList>
    </citation>
    <scope>NUCLEOTIDE SEQUENCE [LARGE SCALE GENOMIC DNA]</scope>
    <source>
        <strain>J138</strain>
    </source>
</reference>
<reference key="4">
    <citation type="submission" date="2002-05" db="EMBL/GenBank/DDBJ databases">
        <title>The genome sequence of Chlamydia pneumoniae TW183 and comparison with other Chlamydia strains based on whole genome sequence analysis.</title>
        <authorList>
            <person name="Geng M.M."/>
            <person name="Schuhmacher A."/>
            <person name="Muehldorfer I."/>
            <person name="Bensch K.W."/>
            <person name="Schaefer K.P."/>
            <person name="Schneider S."/>
            <person name="Pohl T."/>
            <person name="Essig A."/>
            <person name="Marre R."/>
            <person name="Melchers K."/>
        </authorList>
    </citation>
    <scope>NUCLEOTIDE SEQUENCE [LARGE SCALE GENOMIC DNA]</scope>
    <source>
        <strain>TW-183</strain>
    </source>
</reference>
<gene>
    <name type="primary">pgk</name>
    <name type="ordered locus">CPn_0679</name>
    <name type="ordered locus">CP_0068</name>
    <name type="ordered locus">CpB0706</name>
</gene>
<sequence length="402" mass="43046">MDKLTVQDLSPEEKKVLVRVDFNVPMQDGKILDDIRIRSAMPTINYLLKKHAAVILMSHLGRPKGQGFQEEYSLQPVVDVLEGYLGHHVPLAPDCVGEVARQAVAQLSPGRVLLLENLRFHIGEEHPEKDPTFAAELSSYGDFYVNDAFGTSHRKHASVYVVPQAFPGRAAAGLLMEKELEFLGRHLLTSPKRPFTAILGGAKISSKIGVIEALLNQVDYLLLAGGMGFTFLQALGKSLGNSLVEKSALDLARNVLKIAKSRNVTIVLPSDVKAAENLQSKEYSVISIDQGIPPHLQGFDIGPRTTEEFIRIINQSATVFWNGPVGVYEVPPFDSGSIAIANALGNHPSAVTVVGGGDAAAVVALAGCSTKVSHVSTGGGASLEFLEQGFLPGTEVLSPSKS</sequence>
<keyword id="KW-0067">ATP-binding</keyword>
<keyword id="KW-0963">Cytoplasm</keyword>
<keyword id="KW-0324">Glycolysis</keyword>
<keyword id="KW-0418">Kinase</keyword>
<keyword id="KW-0547">Nucleotide-binding</keyword>
<keyword id="KW-0808">Transferase</keyword>
<organism>
    <name type="scientific">Chlamydia pneumoniae</name>
    <name type="common">Chlamydophila pneumoniae</name>
    <dbReference type="NCBI Taxonomy" id="83558"/>
    <lineage>
        <taxon>Bacteria</taxon>
        <taxon>Pseudomonadati</taxon>
        <taxon>Chlamydiota</taxon>
        <taxon>Chlamydiia</taxon>
        <taxon>Chlamydiales</taxon>
        <taxon>Chlamydiaceae</taxon>
        <taxon>Chlamydia/Chlamydophila group</taxon>
        <taxon>Chlamydia</taxon>
    </lineage>
</organism>
<dbReference type="EC" id="2.7.2.3"/>
<dbReference type="EMBL" id="AE001363">
    <property type="protein sequence ID" value="AAD18818.1"/>
    <property type="molecule type" value="Genomic_DNA"/>
</dbReference>
<dbReference type="EMBL" id="AE002161">
    <property type="protein sequence ID" value="AAF37956.1"/>
    <property type="molecule type" value="Genomic_DNA"/>
</dbReference>
<dbReference type="EMBL" id="BA000008">
    <property type="protein sequence ID" value="BAA98886.1"/>
    <property type="molecule type" value="Genomic_DNA"/>
</dbReference>
<dbReference type="EMBL" id="AE009440">
    <property type="protein sequence ID" value="AAP98635.1"/>
    <property type="molecule type" value="Genomic_DNA"/>
</dbReference>
<dbReference type="PIR" id="C72049">
    <property type="entry name" value="C72049"/>
</dbReference>
<dbReference type="PIR" id="D86575">
    <property type="entry name" value="D86575"/>
</dbReference>
<dbReference type="RefSeq" id="NP_224875.1">
    <property type="nucleotide sequence ID" value="NC_000922.1"/>
</dbReference>
<dbReference type="RefSeq" id="WP_010883317.1">
    <property type="nucleotide sequence ID" value="NZ_LN847257.1"/>
</dbReference>
<dbReference type="SMR" id="Q9Z7M5"/>
<dbReference type="STRING" id="406984.CPK_ORF00080"/>
<dbReference type="GeneID" id="45050730"/>
<dbReference type="KEGG" id="cpa:CP_0068"/>
<dbReference type="KEGG" id="cpj:pgk"/>
<dbReference type="KEGG" id="cpn:CPn_0679"/>
<dbReference type="KEGG" id="cpt:CpB0706"/>
<dbReference type="PATRIC" id="fig|115713.3.peg.750"/>
<dbReference type="eggNOG" id="COG0126">
    <property type="taxonomic scope" value="Bacteria"/>
</dbReference>
<dbReference type="HOGENOM" id="CLU_025427_0_2_0"/>
<dbReference type="OMA" id="DMIFDIG"/>
<dbReference type="OrthoDB" id="9808460at2"/>
<dbReference type="UniPathway" id="UPA00109">
    <property type="reaction ID" value="UER00185"/>
</dbReference>
<dbReference type="Proteomes" id="UP000000583">
    <property type="component" value="Chromosome"/>
</dbReference>
<dbReference type="Proteomes" id="UP000000801">
    <property type="component" value="Chromosome"/>
</dbReference>
<dbReference type="GO" id="GO:0005829">
    <property type="term" value="C:cytosol"/>
    <property type="evidence" value="ECO:0007669"/>
    <property type="project" value="TreeGrafter"/>
</dbReference>
<dbReference type="GO" id="GO:0043531">
    <property type="term" value="F:ADP binding"/>
    <property type="evidence" value="ECO:0007669"/>
    <property type="project" value="TreeGrafter"/>
</dbReference>
<dbReference type="GO" id="GO:0005524">
    <property type="term" value="F:ATP binding"/>
    <property type="evidence" value="ECO:0007669"/>
    <property type="project" value="UniProtKB-KW"/>
</dbReference>
<dbReference type="GO" id="GO:0004618">
    <property type="term" value="F:phosphoglycerate kinase activity"/>
    <property type="evidence" value="ECO:0007669"/>
    <property type="project" value="UniProtKB-UniRule"/>
</dbReference>
<dbReference type="GO" id="GO:0006094">
    <property type="term" value="P:gluconeogenesis"/>
    <property type="evidence" value="ECO:0007669"/>
    <property type="project" value="TreeGrafter"/>
</dbReference>
<dbReference type="GO" id="GO:0006096">
    <property type="term" value="P:glycolytic process"/>
    <property type="evidence" value="ECO:0007669"/>
    <property type="project" value="UniProtKB-UniRule"/>
</dbReference>
<dbReference type="CDD" id="cd00318">
    <property type="entry name" value="Phosphoglycerate_kinase"/>
    <property type="match status" value="1"/>
</dbReference>
<dbReference type="FunFam" id="3.40.50.1260:FF:000011">
    <property type="entry name" value="Phosphoglycerate kinase"/>
    <property type="match status" value="1"/>
</dbReference>
<dbReference type="FunFam" id="3.40.50.1260:FF:000031">
    <property type="entry name" value="Phosphoglycerate kinase 1"/>
    <property type="match status" value="1"/>
</dbReference>
<dbReference type="Gene3D" id="3.40.50.1260">
    <property type="entry name" value="Phosphoglycerate kinase, N-terminal domain"/>
    <property type="match status" value="2"/>
</dbReference>
<dbReference type="HAMAP" id="MF_00145">
    <property type="entry name" value="Phosphoglyc_kinase"/>
    <property type="match status" value="1"/>
</dbReference>
<dbReference type="InterPro" id="IPR001576">
    <property type="entry name" value="Phosphoglycerate_kinase"/>
</dbReference>
<dbReference type="InterPro" id="IPR015911">
    <property type="entry name" value="Phosphoglycerate_kinase_CS"/>
</dbReference>
<dbReference type="InterPro" id="IPR015824">
    <property type="entry name" value="Phosphoglycerate_kinase_N"/>
</dbReference>
<dbReference type="InterPro" id="IPR036043">
    <property type="entry name" value="Phosphoglycerate_kinase_sf"/>
</dbReference>
<dbReference type="PANTHER" id="PTHR11406">
    <property type="entry name" value="PHOSPHOGLYCERATE KINASE"/>
    <property type="match status" value="1"/>
</dbReference>
<dbReference type="PANTHER" id="PTHR11406:SF23">
    <property type="entry name" value="PHOSPHOGLYCERATE KINASE 1, CHLOROPLASTIC-RELATED"/>
    <property type="match status" value="1"/>
</dbReference>
<dbReference type="Pfam" id="PF00162">
    <property type="entry name" value="PGK"/>
    <property type="match status" value="1"/>
</dbReference>
<dbReference type="PIRSF" id="PIRSF000724">
    <property type="entry name" value="Pgk"/>
    <property type="match status" value="1"/>
</dbReference>
<dbReference type="PRINTS" id="PR00477">
    <property type="entry name" value="PHGLYCKINASE"/>
</dbReference>
<dbReference type="SUPFAM" id="SSF53748">
    <property type="entry name" value="Phosphoglycerate kinase"/>
    <property type="match status" value="1"/>
</dbReference>
<dbReference type="PROSITE" id="PS00111">
    <property type="entry name" value="PGLYCERATE_KINASE"/>
    <property type="match status" value="1"/>
</dbReference>
<protein>
    <recommendedName>
        <fullName>Phosphoglycerate kinase</fullName>
        <ecNumber>2.7.2.3</ecNumber>
    </recommendedName>
</protein>
<feature type="chain" id="PRO_0000145927" description="Phosphoglycerate kinase">
    <location>
        <begin position="1"/>
        <end position="402"/>
    </location>
</feature>
<feature type="binding site" evidence="1">
    <location>
        <begin position="21"/>
        <end position="23"/>
    </location>
    <ligand>
        <name>substrate</name>
    </ligand>
</feature>
<feature type="binding site" evidence="1">
    <location>
        <position position="36"/>
    </location>
    <ligand>
        <name>substrate</name>
    </ligand>
</feature>
<feature type="binding site" evidence="1">
    <location>
        <begin position="59"/>
        <end position="62"/>
    </location>
    <ligand>
        <name>substrate</name>
    </ligand>
</feature>
<feature type="binding site" evidence="1">
    <location>
        <position position="119"/>
    </location>
    <ligand>
        <name>substrate</name>
    </ligand>
</feature>
<feature type="binding site" evidence="1">
    <location>
        <position position="154"/>
    </location>
    <ligand>
        <name>substrate</name>
    </ligand>
</feature>
<feature type="binding site" evidence="1">
    <location>
        <position position="207"/>
    </location>
    <ligand>
        <name>ATP</name>
        <dbReference type="ChEBI" id="CHEBI:30616"/>
    </ligand>
</feature>
<feature type="binding site" evidence="1">
    <location>
        <position position="298"/>
    </location>
    <ligand>
        <name>ATP</name>
        <dbReference type="ChEBI" id="CHEBI:30616"/>
    </ligand>
</feature>
<feature type="binding site" evidence="1">
    <location>
        <position position="329"/>
    </location>
    <ligand>
        <name>ATP</name>
        <dbReference type="ChEBI" id="CHEBI:30616"/>
    </ligand>
</feature>
<feature type="binding site" evidence="1">
    <location>
        <begin position="356"/>
        <end position="359"/>
    </location>
    <ligand>
        <name>ATP</name>
        <dbReference type="ChEBI" id="CHEBI:30616"/>
    </ligand>
</feature>
<accession>Q9Z7M5</accession>
<accession>Q9JQF8</accession>
<comment type="catalytic activity">
    <reaction>
        <text>(2R)-3-phosphoglycerate + ATP = (2R)-3-phospho-glyceroyl phosphate + ADP</text>
        <dbReference type="Rhea" id="RHEA:14801"/>
        <dbReference type="ChEBI" id="CHEBI:30616"/>
        <dbReference type="ChEBI" id="CHEBI:57604"/>
        <dbReference type="ChEBI" id="CHEBI:58272"/>
        <dbReference type="ChEBI" id="CHEBI:456216"/>
        <dbReference type="EC" id="2.7.2.3"/>
    </reaction>
</comment>
<comment type="pathway">
    <text>Carbohydrate degradation; glycolysis; pyruvate from D-glyceraldehyde 3-phosphate: step 2/5.</text>
</comment>
<comment type="subunit">
    <text evidence="1">Monomer.</text>
</comment>
<comment type="subcellular location">
    <subcellularLocation>
        <location evidence="2">Cytoplasm</location>
    </subcellularLocation>
</comment>
<comment type="similarity">
    <text evidence="2">Belongs to the phosphoglycerate kinase family.</text>
</comment>
<evidence type="ECO:0000250" key="1"/>
<evidence type="ECO:0000305" key="2"/>
<proteinExistence type="inferred from homology"/>
<name>PGK_CHLPN</name>